<reference key="1">
    <citation type="submission" date="2007-02" db="EMBL/GenBank/DDBJ databases">
        <authorList>
            <consortium name="NIH - Mammalian Gene Collection (MGC) project"/>
        </authorList>
    </citation>
    <scope>NUCLEOTIDE SEQUENCE [LARGE SCALE MRNA]</scope>
    <source>
        <strain>Hereford</strain>
        <tissue>Placenta</tissue>
    </source>
</reference>
<gene>
    <name type="primary">GATAD1</name>
</gene>
<evidence type="ECO:0000250" key="1"/>
<evidence type="ECO:0000250" key="2">
    <source>
        <dbReference type="UniProtKB" id="P17679"/>
    </source>
</evidence>
<evidence type="ECO:0000250" key="3">
    <source>
        <dbReference type="UniProtKB" id="Q8WUU5"/>
    </source>
</evidence>
<evidence type="ECO:0000255" key="4">
    <source>
        <dbReference type="PROSITE-ProRule" id="PRU00094"/>
    </source>
</evidence>
<evidence type="ECO:0000256" key="5">
    <source>
        <dbReference type="SAM" id="MobiDB-lite"/>
    </source>
</evidence>
<sequence length="272" mass="28884">MPLGLKPTCSVCKTTSSSMWKKGPQGEILCHHCTGRGGAGGGGSCPGAAGGTGGGGGGTGGGFGAATFASTSAAPPQSNGGGGGKQSKQEIHRRSARLRNTKYKSAPAAEKKVSTKGKGRRHIFKLKNPIKAPESVSTIITAESIFYKGVYYQIGDVVSVIDEQDGKPYYAQIRGFVQDQYCEKSAALTWLIPTLASPRDQFDPASYIVGPEEDLPRKMEYLEFVCHAPSEYFKSRSSPFPTVPTRPEKGYIWTHVGPTPAITIKETVANHL</sequence>
<comment type="subcellular location">
    <subcellularLocation>
        <location evidence="1">Nucleus</location>
    </subcellularLocation>
</comment>
<organism>
    <name type="scientific">Bos taurus</name>
    <name type="common">Bovine</name>
    <dbReference type="NCBI Taxonomy" id="9913"/>
    <lineage>
        <taxon>Eukaryota</taxon>
        <taxon>Metazoa</taxon>
        <taxon>Chordata</taxon>
        <taxon>Craniata</taxon>
        <taxon>Vertebrata</taxon>
        <taxon>Euteleostomi</taxon>
        <taxon>Mammalia</taxon>
        <taxon>Eutheria</taxon>
        <taxon>Laurasiatheria</taxon>
        <taxon>Artiodactyla</taxon>
        <taxon>Ruminantia</taxon>
        <taxon>Pecora</taxon>
        <taxon>Bovidae</taxon>
        <taxon>Bovinae</taxon>
        <taxon>Bos</taxon>
    </lineage>
</organism>
<accession>A2VDY6</accession>
<protein>
    <recommendedName>
        <fullName>GATA zinc finger domain-containing protein 1</fullName>
    </recommendedName>
</protein>
<keyword id="KW-0007">Acetylation</keyword>
<keyword id="KW-1017">Isopeptide bond</keyword>
<keyword id="KW-0479">Metal-binding</keyword>
<keyword id="KW-0539">Nucleus</keyword>
<keyword id="KW-1185">Reference proteome</keyword>
<keyword id="KW-0832">Ubl conjugation</keyword>
<keyword id="KW-0862">Zinc</keyword>
<keyword id="KW-0863">Zinc-finger</keyword>
<dbReference type="EMBL" id="BC133475">
    <property type="protein sequence ID" value="AAI33476.1"/>
    <property type="molecule type" value="mRNA"/>
</dbReference>
<dbReference type="RefSeq" id="NP_001075092.1">
    <property type="nucleotide sequence ID" value="NM_001081623.2"/>
</dbReference>
<dbReference type="FunCoup" id="A2VDY6">
    <property type="interactions" value="3201"/>
</dbReference>
<dbReference type="STRING" id="9913.ENSBTAP00000067623"/>
<dbReference type="PaxDb" id="9913-ENSBTAP00000029332"/>
<dbReference type="GeneID" id="784921"/>
<dbReference type="KEGG" id="bta:784921"/>
<dbReference type="CTD" id="57798"/>
<dbReference type="VEuPathDB" id="HostDB:ENSBTAG00000021996"/>
<dbReference type="eggNOG" id="ENOG502QUY5">
    <property type="taxonomic scope" value="Eukaryota"/>
</dbReference>
<dbReference type="HOGENOM" id="CLU_070432_0_0_1"/>
<dbReference type="InParanoid" id="A2VDY6"/>
<dbReference type="OrthoDB" id="9994231at2759"/>
<dbReference type="TreeFam" id="TF325354"/>
<dbReference type="Proteomes" id="UP000009136">
    <property type="component" value="Chromosome 4"/>
</dbReference>
<dbReference type="Bgee" id="ENSBTAG00000021996">
    <property type="expression patterns" value="Expressed in spermatid and 110 other cell types or tissues"/>
</dbReference>
<dbReference type="GO" id="GO:0005634">
    <property type="term" value="C:nucleus"/>
    <property type="evidence" value="ECO:0000250"/>
    <property type="project" value="UniProtKB"/>
</dbReference>
<dbReference type="GO" id="GO:0043565">
    <property type="term" value="F:sequence-specific DNA binding"/>
    <property type="evidence" value="ECO:0007669"/>
    <property type="project" value="InterPro"/>
</dbReference>
<dbReference type="GO" id="GO:0008270">
    <property type="term" value="F:zinc ion binding"/>
    <property type="evidence" value="ECO:0007669"/>
    <property type="project" value="UniProtKB-KW"/>
</dbReference>
<dbReference type="GO" id="GO:0006325">
    <property type="term" value="P:chromatin organization"/>
    <property type="evidence" value="ECO:0000318"/>
    <property type="project" value="GO_Central"/>
</dbReference>
<dbReference type="GO" id="GO:0006355">
    <property type="term" value="P:regulation of DNA-templated transcription"/>
    <property type="evidence" value="ECO:0007669"/>
    <property type="project" value="InterPro"/>
</dbReference>
<dbReference type="FunFam" id="3.30.50.10:FF:000048">
    <property type="entry name" value="GATA zinc finger domain-containing protein 1"/>
    <property type="match status" value="1"/>
</dbReference>
<dbReference type="Gene3D" id="3.30.50.10">
    <property type="entry name" value="Erythroid Transcription Factor GATA-1, subunit A"/>
    <property type="match status" value="1"/>
</dbReference>
<dbReference type="InterPro" id="IPR039050">
    <property type="entry name" value="GATAD1"/>
</dbReference>
<dbReference type="InterPro" id="IPR000679">
    <property type="entry name" value="Znf_GATA"/>
</dbReference>
<dbReference type="InterPro" id="IPR013088">
    <property type="entry name" value="Znf_NHR/GATA"/>
</dbReference>
<dbReference type="PANTHER" id="PTHR13340">
    <property type="entry name" value="GATA ZINC FINGER DOMAIN-CONTAINING"/>
    <property type="match status" value="1"/>
</dbReference>
<dbReference type="PANTHER" id="PTHR13340:SF2">
    <property type="entry name" value="GATA ZINC FINGER DOMAIN-CONTAINING PROTEIN 1"/>
    <property type="match status" value="1"/>
</dbReference>
<dbReference type="SUPFAM" id="SSF57716">
    <property type="entry name" value="Glucocorticoid receptor-like (DNA-binding domain)"/>
    <property type="match status" value="1"/>
</dbReference>
<dbReference type="PROSITE" id="PS50114">
    <property type="entry name" value="GATA_ZN_FINGER_2"/>
    <property type="match status" value="1"/>
</dbReference>
<name>GATA1_BOVIN</name>
<feature type="chain" id="PRO_0000288908" description="GATA zinc finger domain-containing protein 1">
    <location>
        <begin position="1"/>
        <end position="272"/>
    </location>
</feature>
<feature type="zinc finger region" description="GATA-type" evidence="4">
    <location>
        <begin position="9"/>
        <end position="33"/>
    </location>
</feature>
<feature type="region of interest" description="Disordered" evidence="5">
    <location>
        <begin position="67"/>
        <end position="120"/>
    </location>
</feature>
<feature type="modified residue" description="N6-acetyllysine" evidence="2">
    <location>
        <position position="167"/>
    </location>
</feature>
<feature type="cross-link" description="Glycyl lysine isopeptide (Lys-Gly) (interchain with G-Cter in SUMO2)" evidence="3">
    <location>
        <position position="265"/>
    </location>
</feature>
<proteinExistence type="evidence at transcript level"/>